<sequence length="290" mass="33174">MTSTKEIKNKIVSVTNTKKITKAMEMVAVSKMRKTEERMRSGRPYSDIIRKVIDHVTQGNLEYKHSYLEERKTNRIGMIIISTDRGLCGGLNTNLFKQVLFKIQNFAKVNIPCDLILFGLKSLSVFKLCGSNILAKATNLGENPKLEELINSVGIILQEYQYKRIDKIFIAYNKFHNKMSQYPTITQLLPFSKKNDQDASNNNWDYLYEPESKLILDTLFNRYIESQVYQSILENIASEHAARMIAMKTATDNSGNRIKELQLVYNKVRQANITQELNEIVSGASAVSID</sequence>
<organism>
    <name type="scientific">Buchnera aphidicola subsp. Acyrthosiphon pisum (strain Tuc7)</name>
    <dbReference type="NCBI Taxonomy" id="561501"/>
    <lineage>
        <taxon>Bacteria</taxon>
        <taxon>Pseudomonadati</taxon>
        <taxon>Pseudomonadota</taxon>
        <taxon>Gammaproteobacteria</taxon>
        <taxon>Enterobacterales</taxon>
        <taxon>Erwiniaceae</taxon>
        <taxon>Buchnera</taxon>
    </lineage>
</organism>
<comment type="function">
    <text evidence="1">Produces ATP from ADP in the presence of a proton gradient across the membrane. The gamma chain is believed to be important in regulating ATPase activity and the flow of protons through the CF(0) complex.</text>
</comment>
<comment type="subunit">
    <text evidence="1">F-type ATPases have 2 components, CF(1) - the catalytic core - and CF(0) - the membrane proton channel. CF(1) has five subunits: alpha(3), beta(3), gamma(1), delta(1), epsilon(1). CF(0) has three main subunits: a, b and c.</text>
</comment>
<comment type="subcellular location">
    <subcellularLocation>
        <location evidence="1">Cell membrane</location>
        <topology evidence="1">Peripheral membrane protein</topology>
    </subcellularLocation>
</comment>
<comment type="similarity">
    <text evidence="1">Belongs to the ATPase gamma chain family.</text>
</comment>
<reference key="1">
    <citation type="journal article" date="2009" name="Science">
        <title>The dynamics and time scale of ongoing genomic erosion in symbiotic bacteria.</title>
        <authorList>
            <person name="Moran N.A."/>
            <person name="McLaughlin H.J."/>
            <person name="Sorek R."/>
        </authorList>
    </citation>
    <scope>NUCLEOTIDE SEQUENCE [LARGE SCALE GENOMIC DNA]</scope>
    <source>
        <strain>Tuc7</strain>
    </source>
</reference>
<proteinExistence type="inferred from homology"/>
<dbReference type="EMBL" id="CP001158">
    <property type="protein sequence ID" value="ACL29841.1"/>
    <property type="molecule type" value="Genomic_DNA"/>
</dbReference>
<dbReference type="RefSeq" id="WP_009873969.1">
    <property type="nucleotide sequence ID" value="NC_011834.1"/>
</dbReference>
<dbReference type="SMR" id="B8D6S6"/>
<dbReference type="KEGG" id="bau:BUAPTUC7_007"/>
<dbReference type="HOGENOM" id="CLU_050669_0_1_6"/>
<dbReference type="GO" id="GO:0005886">
    <property type="term" value="C:plasma membrane"/>
    <property type="evidence" value="ECO:0007669"/>
    <property type="project" value="UniProtKB-SubCell"/>
</dbReference>
<dbReference type="GO" id="GO:0045259">
    <property type="term" value="C:proton-transporting ATP synthase complex"/>
    <property type="evidence" value="ECO:0007669"/>
    <property type="project" value="UniProtKB-KW"/>
</dbReference>
<dbReference type="GO" id="GO:0005524">
    <property type="term" value="F:ATP binding"/>
    <property type="evidence" value="ECO:0007669"/>
    <property type="project" value="UniProtKB-UniRule"/>
</dbReference>
<dbReference type="GO" id="GO:0046933">
    <property type="term" value="F:proton-transporting ATP synthase activity, rotational mechanism"/>
    <property type="evidence" value="ECO:0007669"/>
    <property type="project" value="UniProtKB-UniRule"/>
</dbReference>
<dbReference type="GO" id="GO:0042777">
    <property type="term" value="P:proton motive force-driven plasma membrane ATP synthesis"/>
    <property type="evidence" value="ECO:0007669"/>
    <property type="project" value="UniProtKB-UniRule"/>
</dbReference>
<dbReference type="CDD" id="cd12151">
    <property type="entry name" value="F1-ATPase_gamma"/>
    <property type="match status" value="1"/>
</dbReference>
<dbReference type="FunFam" id="1.10.287.80:FF:000005">
    <property type="entry name" value="ATP synthase gamma chain"/>
    <property type="match status" value="1"/>
</dbReference>
<dbReference type="Gene3D" id="3.40.1380.10">
    <property type="match status" value="1"/>
</dbReference>
<dbReference type="Gene3D" id="1.10.287.80">
    <property type="entry name" value="ATP synthase, gamma subunit, helix hairpin domain"/>
    <property type="match status" value="1"/>
</dbReference>
<dbReference type="HAMAP" id="MF_00815">
    <property type="entry name" value="ATP_synth_gamma_bact"/>
    <property type="match status" value="1"/>
</dbReference>
<dbReference type="InterPro" id="IPR035968">
    <property type="entry name" value="ATP_synth_F1_ATPase_gsu"/>
</dbReference>
<dbReference type="InterPro" id="IPR000131">
    <property type="entry name" value="ATP_synth_F1_gsu"/>
</dbReference>
<dbReference type="InterPro" id="IPR023632">
    <property type="entry name" value="ATP_synth_F1_gsu_CS"/>
</dbReference>
<dbReference type="NCBIfam" id="TIGR01146">
    <property type="entry name" value="ATPsyn_F1gamma"/>
    <property type="match status" value="1"/>
</dbReference>
<dbReference type="NCBIfam" id="NF004144">
    <property type="entry name" value="PRK05621.1-1"/>
    <property type="match status" value="1"/>
</dbReference>
<dbReference type="PANTHER" id="PTHR11693">
    <property type="entry name" value="ATP SYNTHASE GAMMA CHAIN"/>
    <property type="match status" value="1"/>
</dbReference>
<dbReference type="PANTHER" id="PTHR11693:SF22">
    <property type="entry name" value="ATP SYNTHASE SUBUNIT GAMMA, MITOCHONDRIAL"/>
    <property type="match status" value="1"/>
</dbReference>
<dbReference type="Pfam" id="PF00231">
    <property type="entry name" value="ATP-synt"/>
    <property type="match status" value="1"/>
</dbReference>
<dbReference type="PRINTS" id="PR00126">
    <property type="entry name" value="ATPASEGAMMA"/>
</dbReference>
<dbReference type="SUPFAM" id="SSF52943">
    <property type="entry name" value="ATP synthase (F1-ATPase), gamma subunit"/>
    <property type="match status" value="1"/>
</dbReference>
<dbReference type="PROSITE" id="PS00153">
    <property type="entry name" value="ATPASE_GAMMA"/>
    <property type="match status" value="1"/>
</dbReference>
<name>ATPG_BUCAT</name>
<evidence type="ECO:0000255" key="1">
    <source>
        <dbReference type="HAMAP-Rule" id="MF_00815"/>
    </source>
</evidence>
<gene>
    <name evidence="1" type="primary">atpG</name>
    <name type="ordered locus">BUAPTUC7_007</name>
</gene>
<protein>
    <recommendedName>
        <fullName evidence="1">ATP synthase gamma chain</fullName>
    </recommendedName>
    <alternativeName>
        <fullName evidence="1">ATP synthase F1 sector gamma subunit</fullName>
    </alternativeName>
    <alternativeName>
        <fullName evidence="1">F-ATPase gamma subunit</fullName>
    </alternativeName>
</protein>
<keyword id="KW-0066">ATP synthesis</keyword>
<keyword id="KW-1003">Cell membrane</keyword>
<keyword id="KW-0139">CF(1)</keyword>
<keyword id="KW-0375">Hydrogen ion transport</keyword>
<keyword id="KW-0406">Ion transport</keyword>
<keyword id="KW-0472">Membrane</keyword>
<keyword id="KW-0813">Transport</keyword>
<feature type="chain" id="PRO_1000148606" description="ATP synthase gamma chain">
    <location>
        <begin position="1"/>
        <end position="290"/>
    </location>
</feature>
<accession>B8D6S6</accession>